<comment type="function">
    <text evidence="1">Part of the mycobacterial fatty acid elongation system FAS-II, which is involved in mycolic acid biosynthesis. Catalyzes the elongation of long chain acyl-ACP substrates by the addition of two carbons from malonyl-ACP to an acyl acceptor. Involved in the initial extension of the mycolate chain and forms monounsaturated fatty acids that averaged 40 carbons in length.</text>
</comment>
<comment type="catalytic activity">
    <reaction evidence="1">
        <text>an ultra-long-chain mono-unsaturated fatty acyl-[ACP] + malonyl-[ACP] + H(+) = a 3-oxo-ultra-long-chain mono-unsaturated fatty acyl-[ACP] + holo-[ACP] + CO2</text>
        <dbReference type="Rhea" id="RHEA:65312"/>
        <dbReference type="Rhea" id="RHEA-COMP:9623"/>
        <dbReference type="Rhea" id="RHEA-COMP:9685"/>
        <dbReference type="Rhea" id="RHEA-COMP:16765"/>
        <dbReference type="Rhea" id="RHEA-COMP:16775"/>
        <dbReference type="ChEBI" id="CHEBI:15378"/>
        <dbReference type="ChEBI" id="CHEBI:16526"/>
        <dbReference type="ChEBI" id="CHEBI:64479"/>
        <dbReference type="ChEBI" id="CHEBI:78449"/>
        <dbReference type="ChEBI" id="CHEBI:156399"/>
        <dbReference type="ChEBI" id="CHEBI:156400"/>
        <dbReference type="EC" id="2.3.1.293"/>
    </reaction>
    <physiologicalReaction direction="left-to-right" evidence="1">
        <dbReference type="Rhea" id="RHEA:65313"/>
    </physiologicalReaction>
</comment>
<comment type="pathway">
    <text evidence="1">Lipid metabolism; mycolic acid biosynthesis.</text>
</comment>
<comment type="subcellular location">
    <subcellularLocation>
        <location evidence="1">Cytoplasm</location>
    </subcellularLocation>
</comment>
<comment type="similarity">
    <text evidence="3">Belongs to the thiolase-like superfamily. Beta-ketoacyl-ACP synthases family.</text>
</comment>
<feature type="chain" id="PRO_0000426793" description="3-oxoacyl-[acyl-carrier-protein] synthase 1">
    <location>
        <begin position="1"/>
        <end position="416"/>
    </location>
</feature>
<feature type="domain" description="Ketosynthase family 3 (KS3)" evidence="2">
    <location>
        <begin position="11"/>
        <end position="415"/>
    </location>
</feature>
<feature type="active site" description="For beta-ketoacyl synthase activity" evidence="2">
    <location>
        <position position="171"/>
    </location>
</feature>
<feature type="active site" description="For beta-ketoacyl synthase activity" evidence="2">
    <location>
        <position position="311"/>
    </location>
</feature>
<feature type="active site" description="For beta-ketoacyl synthase activity" evidence="2">
    <location>
        <position position="345"/>
    </location>
</feature>
<feature type="binding site" evidence="1">
    <location>
        <position position="311"/>
    </location>
    <ligand>
        <name>substrate</name>
    </ligand>
</feature>
<feature type="binding site" evidence="1">
    <location>
        <position position="345"/>
    </location>
    <ligand>
        <name>substrate</name>
    </ligand>
</feature>
<reference key="1">
    <citation type="journal article" date="2002" name="J. Bacteriol.">
        <title>Whole-genome comparison of Mycobacterium tuberculosis clinical and laboratory strains.</title>
        <authorList>
            <person name="Fleischmann R.D."/>
            <person name="Alland D."/>
            <person name="Eisen J.A."/>
            <person name="Carpenter L."/>
            <person name="White O."/>
            <person name="Peterson J.D."/>
            <person name="DeBoy R.T."/>
            <person name="Dodson R.J."/>
            <person name="Gwinn M.L."/>
            <person name="Haft D.H."/>
            <person name="Hickey E.K."/>
            <person name="Kolonay J.F."/>
            <person name="Nelson W.C."/>
            <person name="Umayam L.A."/>
            <person name="Ermolaeva M.D."/>
            <person name="Salzberg S.L."/>
            <person name="Delcher A."/>
            <person name="Utterback T.R."/>
            <person name="Weidman J.F."/>
            <person name="Khouri H.M."/>
            <person name="Gill J."/>
            <person name="Mikula A."/>
            <person name="Bishai W."/>
            <person name="Jacobs W.R. Jr."/>
            <person name="Venter J.C."/>
            <person name="Fraser C.M."/>
        </authorList>
    </citation>
    <scope>NUCLEOTIDE SEQUENCE [LARGE SCALE GENOMIC DNA]</scope>
    <source>
        <strain>CDC 1551 / Oshkosh</strain>
    </source>
</reference>
<organism>
    <name type="scientific">Mycobacterium tuberculosis (strain CDC 1551 / Oshkosh)</name>
    <dbReference type="NCBI Taxonomy" id="83331"/>
    <lineage>
        <taxon>Bacteria</taxon>
        <taxon>Bacillati</taxon>
        <taxon>Actinomycetota</taxon>
        <taxon>Actinomycetes</taxon>
        <taxon>Mycobacteriales</taxon>
        <taxon>Mycobacteriaceae</taxon>
        <taxon>Mycobacterium</taxon>
        <taxon>Mycobacterium tuberculosis complex</taxon>
    </lineage>
</organism>
<proteinExistence type="inferred from homology"/>
<accession>P9WQD8</accession>
<accession>L0T991</accession>
<accession>P63454</accession>
<accession>Q10524</accession>
<protein>
    <recommendedName>
        <fullName>3-oxoacyl-[acyl-carrier-protein] synthase 1</fullName>
        <ecNumber evidence="1">2.3.1.293</ecNumber>
    </recommendedName>
    <alternativeName>
        <fullName>Beta-ketoacyl-ACP synthase 1</fullName>
        <shortName>KAS 1</shortName>
    </alternativeName>
</protein>
<sequence length="416" mass="43316">MSQPSTANGGFPSVVVTAVTATTSISPDIESTWKGLLAGESGIHALEDEFVTKWDLAVKIGGHLKDPVDSHMGRLDMRRMSYVQRMGKLLGGQLWESAGSPEVDPDRFAVVVGTGLGGAERIVESYDLMNAGGPRKVSPLAVQMIMPNGAAAVIGLQLGARAGVMTPVSACSSGSEAIAHAWRQIVMGDADVAVCGGVEGPIEALPIAAFSMMRAMSTRNDEPERASRPFDKDRDGFVFGEAGALMLIETEEHAKARGAKPLARLLGAGITSDAFHMVAPAADGVRAGRAMTRSLELAGLSPADIDHVNAHGTATPIGDAAEANAIRVAGCDQAAVYAPKSALGHSIGAVGALESVLTVLTLRDGVIPPTLNYETPDPEIDLDVVAGEPRYGDYRYAVNNSFGFGGHNVALAFGRY</sequence>
<evidence type="ECO:0000250" key="1">
    <source>
        <dbReference type="UniProtKB" id="P9WQD9"/>
    </source>
</evidence>
<evidence type="ECO:0000255" key="2">
    <source>
        <dbReference type="PROSITE-ProRule" id="PRU01348"/>
    </source>
</evidence>
<evidence type="ECO:0000305" key="3"/>
<gene>
    <name type="primary">kasA</name>
    <name type="ordered locus">MT2305</name>
</gene>
<keyword id="KW-0012">Acyltransferase</keyword>
<keyword id="KW-0963">Cytoplasm</keyword>
<keyword id="KW-0275">Fatty acid biosynthesis</keyword>
<keyword id="KW-0276">Fatty acid metabolism</keyword>
<keyword id="KW-0444">Lipid biosynthesis</keyword>
<keyword id="KW-0443">Lipid metabolism</keyword>
<keyword id="KW-1185">Reference proteome</keyword>
<keyword id="KW-0808">Transferase</keyword>
<dbReference type="EC" id="2.3.1.293" evidence="1"/>
<dbReference type="EMBL" id="AE000516">
    <property type="protein sequence ID" value="AAK46589.1"/>
    <property type="molecule type" value="Genomic_DNA"/>
</dbReference>
<dbReference type="PIR" id="A70779">
    <property type="entry name" value="A70779"/>
</dbReference>
<dbReference type="RefSeq" id="WP_003411571.1">
    <property type="nucleotide sequence ID" value="NZ_KK341227.1"/>
</dbReference>
<dbReference type="SMR" id="P9WQD8"/>
<dbReference type="BindingDB" id="P9WQD8"/>
<dbReference type="GeneID" id="45426225"/>
<dbReference type="KEGG" id="mtc:MT2305"/>
<dbReference type="PATRIC" id="fig|83331.31.peg.2482"/>
<dbReference type="HOGENOM" id="CLU_000022_69_2_11"/>
<dbReference type="UniPathway" id="UPA00915"/>
<dbReference type="Proteomes" id="UP000001020">
    <property type="component" value="Chromosome"/>
</dbReference>
<dbReference type="GO" id="GO:0005829">
    <property type="term" value="C:cytosol"/>
    <property type="evidence" value="ECO:0007669"/>
    <property type="project" value="TreeGrafter"/>
</dbReference>
<dbReference type="GO" id="GO:0004315">
    <property type="term" value="F:3-oxoacyl-[acyl-carrier-protein] synthase activity"/>
    <property type="evidence" value="ECO:0007669"/>
    <property type="project" value="TreeGrafter"/>
</dbReference>
<dbReference type="GO" id="GO:0006633">
    <property type="term" value="P:fatty acid biosynthetic process"/>
    <property type="evidence" value="ECO:0007669"/>
    <property type="project" value="UniProtKB-KW"/>
</dbReference>
<dbReference type="CDD" id="cd00834">
    <property type="entry name" value="KAS_I_II"/>
    <property type="match status" value="1"/>
</dbReference>
<dbReference type="FunFam" id="3.40.47.10:FF:000029">
    <property type="entry name" value="3-oxoacyl-[acyl-carrier-protein] synthase 1"/>
    <property type="match status" value="1"/>
</dbReference>
<dbReference type="FunFam" id="3.40.47.10:FF:000018">
    <property type="entry name" value="3-oxoacyl-[acyl-carrier-protein] synthase 2"/>
    <property type="match status" value="1"/>
</dbReference>
<dbReference type="Gene3D" id="3.40.47.10">
    <property type="match status" value="2"/>
</dbReference>
<dbReference type="InterPro" id="IPR000794">
    <property type="entry name" value="Beta-ketoacyl_synthase"/>
</dbReference>
<dbReference type="InterPro" id="IPR014031">
    <property type="entry name" value="Ketoacyl_synth_C"/>
</dbReference>
<dbReference type="InterPro" id="IPR014030">
    <property type="entry name" value="Ketoacyl_synth_N"/>
</dbReference>
<dbReference type="InterPro" id="IPR020841">
    <property type="entry name" value="PKS_Beta-ketoAc_synthase_dom"/>
</dbReference>
<dbReference type="InterPro" id="IPR016039">
    <property type="entry name" value="Thiolase-like"/>
</dbReference>
<dbReference type="NCBIfam" id="NF005589">
    <property type="entry name" value="PRK07314.1"/>
    <property type="match status" value="1"/>
</dbReference>
<dbReference type="NCBIfam" id="NF005916">
    <property type="entry name" value="PRK07910.1"/>
    <property type="match status" value="1"/>
</dbReference>
<dbReference type="PANTHER" id="PTHR11712:SF336">
    <property type="entry name" value="3-OXOACYL-[ACYL-CARRIER-PROTEIN] SYNTHASE, MITOCHONDRIAL"/>
    <property type="match status" value="1"/>
</dbReference>
<dbReference type="PANTHER" id="PTHR11712">
    <property type="entry name" value="POLYKETIDE SYNTHASE-RELATED"/>
    <property type="match status" value="1"/>
</dbReference>
<dbReference type="Pfam" id="PF00109">
    <property type="entry name" value="ketoacyl-synt"/>
    <property type="match status" value="1"/>
</dbReference>
<dbReference type="Pfam" id="PF02801">
    <property type="entry name" value="Ketoacyl-synt_C"/>
    <property type="match status" value="1"/>
</dbReference>
<dbReference type="SMART" id="SM00825">
    <property type="entry name" value="PKS_KS"/>
    <property type="match status" value="1"/>
</dbReference>
<dbReference type="SUPFAM" id="SSF53901">
    <property type="entry name" value="Thiolase-like"/>
    <property type="match status" value="2"/>
</dbReference>
<dbReference type="PROSITE" id="PS52004">
    <property type="entry name" value="KS3_2"/>
    <property type="match status" value="1"/>
</dbReference>
<name>KASA_MYCTO</name>